<name>VL2_HPV05</name>
<organismHost>
    <name type="scientific">Homo sapiens</name>
    <name type="common">Human</name>
    <dbReference type="NCBI Taxonomy" id="9606"/>
</organismHost>
<proteinExistence type="inferred from homology"/>
<evidence type="ECO:0000255" key="1">
    <source>
        <dbReference type="HAMAP-Rule" id="MF_04003"/>
    </source>
</evidence>
<evidence type="ECO:0000256" key="2">
    <source>
        <dbReference type="SAM" id="MobiDB-lite"/>
    </source>
</evidence>
<keyword id="KW-0167">Capsid protein</keyword>
<keyword id="KW-1176">Cytoplasmic inwards viral transport</keyword>
<keyword id="KW-1015">Disulfide bond</keyword>
<keyword id="KW-0238">DNA-binding</keyword>
<keyword id="KW-1039">Host endosome</keyword>
<keyword id="KW-1040">Host Golgi apparatus</keyword>
<keyword id="KW-1048">Host nucleus</keyword>
<keyword id="KW-0945">Host-virus interaction</keyword>
<keyword id="KW-0426">Late protein</keyword>
<keyword id="KW-1177">Microtubular inwards viral transport</keyword>
<keyword id="KW-0597">Phosphoprotein</keyword>
<keyword id="KW-1185">Reference proteome</keyword>
<keyword id="KW-1163">Viral penetration into host nucleus</keyword>
<keyword id="KW-0946">Virion</keyword>
<keyword id="KW-1160">Virus entry into host cell</keyword>
<sequence>MARAKTVKRDSVTHIYQTCKQAGTCPPDVINKVEQTTVADNILKYGSAGVFFGGLGISTGRGTGGATGYVPLGEGPGVRVGGTPTVVRPSLVPETIGPVDILPIDTVNPVEPTASSVVPLTESTGADLLPGEVETIAEIHPVPEGPSVDTPVVTTSTGSSAVLEVAPEPIPPTRVRVSRTQYHNPSFQIITESTPAQGESSLADHVLVTSGSGGQRIGGDITDIIELEEIPSRYTFEIEEPTPPRRSSTPLPRNQSVGRRRGFSLTNRRLVQQVQVDNPLFLTQPSKLVRFAFDNPVFEEEVTNIFENDLDVFEEPPDRDFLDVRELGRPQYSTTPAGYVRVSRLGTRATIRTRSGAQIGSQVHFYRDLSSINTEDPIELQLLGQHSGDATIVHGPVESTFIDMDISENPLSESIEAYSHDLLLDETVEDFSGSQLVIGNRRSTNSYTVPRFETTRNGSYYTQDTKGYYVAYPESRNNAEIIYPTPDIPVVIIHPHDSTGDFYLHPSLHRRKRKRKYL</sequence>
<organism>
    <name type="scientific">Human papillomavirus 5</name>
    <dbReference type="NCBI Taxonomy" id="333923"/>
    <lineage>
        <taxon>Viruses</taxon>
        <taxon>Monodnaviria</taxon>
        <taxon>Shotokuvirae</taxon>
        <taxon>Cossaviricota</taxon>
        <taxon>Papovaviricetes</taxon>
        <taxon>Zurhausenvirales</taxon>
        <taxon>Papillomaviridae</taxon>
        <taxon>Firstpapillomavirinae</taxon>
        <taxon>Betapapillomavirus</taxon>
        <taxon>Betapapillomavirus 1</taxon>
    </lineage>
</organism>
<reference key="1">
    <citation type="journal article" date="1987" name="Virology">
        <title>Nucleotide sequence and genome organization of human papillomavirus type 5.</title>
        <authorList>
            <person name="Zachow K.R."/>
            <person name="Ostrow R.S."/>
            <person name="Faras A.J."/>
        </authorList>
    </citation>
    <scope>NUCLEOTIDE SEQUENCE [GENOMIC DNA]</scope>
</reference>
<comment type="function">
    <text evidence="1">Minor protein of the capsid that localizes along the inner surface of the virion, within the central cavities beneath the L1 pentamers. Plays a role in capsid stabilization through interaction with the major capsid protein L1. Once the virion enters the host cell, L2 escorts the genomic DNA into the nucleus by promoting escape from the endosomal compartments and traffic through the host Golgi network. Mechanistically, the C-terminus of L2 possesses a cell-penetrating peptide that protudes from the host endosome, interacts with host cytoplasmic retromer cargo and thereby mediates the capsid delivery to the host trans-Golgi network. Plays a role through its interaction with host dynein in the intracellular microtubule-dependent transport of viral capsid toward the nucleus. Mediates the viral genome import into the nucleus through binding to host importins. Once within the nucleus, L2 localizes viral genomes to host PML bodies in order to activate early gene expression for establishment of infection. Later on, promotes late gene expression by interacting with the viral E2 protein and by inhibiting its transcriptional activation functions. During virion assembly, encapsidates the genome by direct interaction with the viral DNA.</text>
</comment>
<comment type="subunit">
    <text evidence="1">Interacts with major capsid protein L1. Interacts with E2; this interaction inhibits E2 transcriptional activity but not the DNA replication function E2. Interacts with host GADD45GIP1. Interacts with host HSPA8; this interaction is required for L2 nuclear translocation. Interacts with host importins KPNB2 and KPNB3. Forms a complex with importin alpha2-beta1 heterodimers via interaction with the importin alpha2 adapter. Interacts with host DYNLT1; this interaction is essential for virus intracellular transport during entry. Interacts (via C-terminus) with host retromer subunits VPS35 and VPS29.</text>
</comment>
<comment type="subcellular location">
    <subcellularLocation>
        <location evidence="1">Virion</location>
    </subcellularLocation>
    <subcellularLocation>
        <location evidence="1">Host nucleus</location>
    </subcellularLocation>
    <subcellularLocation>
        <location evidence="1">Host early endosome</location>
    </subcellularLocation>
    <subcellularLocation>
        <location evidence="1">Host Golgi apparatus</location>
    </subcellularLocation>
</comment>
<comment type="PTM">
    <text evidence="1">Highly phosphorylated.</text>
</comment>
<comment type="similarity">
    <text evidence="1">Belongs to the papillomaviridae L2 protein family.</text>
</comment>
<protein>
    <recommendedName>
        <fullName evidence="1">Minor capsid protein L2</fullName>
    </recommendedName>
</protein>
<dbReference type="EMBL" id="M17463">
    <property type="protein sequence ID" value="AAA46989.1"/>
    <property type="molecule type" value="Genomic_DNA"/>
</dbReference>
<dbReference type="PIR" id="B26277">
    <property type="entry name" value="P2WL5"/>
</dbReference>
<dbReference type="RefSeq" id="NP_041371.1">
    <property type="nucleotide sequence ID" value="NC_001531.1"/>
</dbReference>
<dbReference type="GeneID" id="1489053"/>
<dbReference type="KEGG" id="vg:1489053"/>
<dbReference type="OrthoDB" id="8047at10239"/>
<dbReference type="Proteomes" id="UP000009252">
    <property type="component" value="Genome"/>
</dbReference>
<dbReference type="GO" id="GO:0043657">
    <property type="term" value="C:host cell"/>
    <property type="evidence" value="ECO:0007669"/>
    <property type="project" value="GOC"/>
</dbReference>
<dbReference type="GO" id="GO:0044174">
    <property type="term" value="C:host cell endosome"/>
    <property type="evidence" value="ECO:0007669"/>
    <property type="project" value="UniProtKB-KW"/>
</dbReference>
<dbReference type="GO" id="GO:0044177">
    <property type="term" value="C:host cell Golgi apparatus"/>
    <property type="evidence" value="ECO:0007669"/>
    <property type="project" value="UniProtKB-SubCell"/>
</dbReference>
<dbReference type="GO" id="GO:0042025">
    <property type="term" value="C:host cell nucleus"/>
    <property type="evidence" value="ECO:0007669"/>
    <property type="project" value="UniProtKB-SubCell"/>
</dbReference>
<dbReference type="GO" id="GO:0019028">
    <property type="term" value="C:viral capsid"/>
    <property type="evidence" value="ECO:0007669"/>
    <property type="project" value="UniProtKB-UniRule"/>
</dbReference>
<dbReference type="GO" id="GO:0003677">
    <property type="term" value="F:DNA binding"/>
    <property type="evidence" value="ECO:0007669"/>
    <property type="project" value="UniProtKB-UniRule"/>
</dbReference>
<dbReference type="GO" id="GO:0005198">
    <property type="term" value="F:structural molecule activity"/>
    <property type="evidence" value="ECO:0007669"/>
    <property type="project" value="UniProtKB-UniRule"/>
</dbReference>
<dbReference type="GO" id="GO:0075521">
    <property type="term" value="P:microtubule-dependent intracellular transport of viral material towards nucleus"/>
    <property type="evidence" value="ECO:0007669"/>
    <property type="project" value="UniProtKB-UniRule"/>
</dbReference>
<dbReference type="GO" id="GO:0046718">
    <property type="term" value="P:symbiont entry into host cell"/>
    <property type="evidence" value="ECO:0007669"/>
    <property type="project" value="UniProtKB-KW"/>
</dbReference>
<dbReference type="GO" id="GO:0075732">
    <property type="term" value="P:viral penetration into host nucleus"/>
    <property type="evidence" value="ECO:0007669"/>
    <property type="project" value="UniProtKB-KW"/>
</dbReference>
<dbReference type="HAMAP" id="MF_04003">
    <property type="entry name" value="PPV_L2"/>
    <property type="match status" value="1"/>
</dbReference>
<dbReference type="InterPro" id="IPR000784">
    <property type="entry name" value="Late_L2"/>
</dbReference>
<dbReference type="Pfam" id="PF00513">
    <property type="entry name" value="Late_protein_L2"/>
    <property type="match status" value="1"/>
</dbReference>
<gene>
    <name evidence="1" type="primary">L2</name>
</gene>
<feature type="chain" id="PRO_0000133570" description="Minor capsid protein L2">
    <location>
        <begin position="1"/>
        <end position="518"/>
    </location>
</feature>
<feature type="region of interest" description="Disordered" evidence="2">
    <location>
        <begin position="237"/>
        <end position="262"/>
    </location>
</feature>
<feature type="short sequence motif" description="Nuclear localization signal" evidence="1">
    <location>
        <begin position="1"/>
        <end position="10"/>
    </location>
</feature>
<feature type="short sequence motif" description="Nuclear localization signal" evidence="1">
    <location>
        <begin position="510"/>
        <end position="517"/>
    </location>
</feature>
<feature type="disulfide bond" evidence="1">
    <location>
        <begin position="19"/>
        <end position="25"/>
    </location>
</feature>
<accession>P06918</accession>